<feature type="chain" id="PRO_0000208929" description="Methylamine utilization protein MauD">
    <location>
        <begin position="1"/>
        <end position="211"/>
    </location>
</feature>
<feature type="transmembrane region" description="Helical" evidence="1">
    <location>
        <begin position="5"/>
        <end position="25"/>
    </location>
</feature>
<feature type="domain" description="Thioredoxin" evidence="2">
    <location>
        <begin position="50"/>
        <end position="187"/>
    </location>
</feature>
<accession>Q50232</accession>
<reference key="1">
    <citation type="journal article" date="1994" name="J. Bacteriol.">
        <title>Organization of the methylamine utilization (mau) genes in Methylophilus methylotrophus W3A1-NS.</title>
        <authorList>
            <person name="Chistoserdov A.Y."/>
            <person name="McIntire W.S."/>
            <person name="Mathews F.S."/>
            <person name="Lidstrom M.E."/>
        </authorList>
    </citation>
    <scope>NUCLEOTIDE SEQUENCE [GENOMIC DNA]</scope>
</reference>
<dbReference type="EMBL" id="L26407">
    <property type="protein sequence ID" value="AAB46950.1"/>
    <property type="molecule type" value="Genomic_DNA"/>
</dbReference>
<dbReference type="PIR" id="T10072">
    <property type="entry name" value="T10072"/>
</dbReference>
<dbReference type="SMR" id="Q50232"/>
<dbReference type="STRING" id="1122236.GCA_000378225_02090"/>
<dbReference type="UniPathway" id="UPA00895"/>
<dbReference type="GO" id="GO:0016020">
    <property type="term" value="C:membrane"/>
    <property type="evidence" value="ECO:0007669"/>
    <property type="project" value="UniProtKB-SubCell"/>
</dbReference>
<dbReference type="GO" id="GO:0030416">
    <property type="term" value="P:methylamine metabolic process"/>
    <property type="evidence" value="ECO:0007669"/>
    <property type="project" value="InterPro"/>
</dbReference>
<dbReference type="CDD" id="cd02967">
    <property type="entry name" value="mauD"/>
    <property type="match status" value="1"/>
</dbReference>
<dbReference type="Gene3D" id="3.40.30.10">
    <property type="entry name" value="Glutaredoxin"/>
    <property type="match status" value="1"/>
</dbReference>
<dbReference type="InterPro" id="IPR013478">
    <property type="entry name" value="MeN_DH_accessory"/>
</dbReference>
<dbReference type="InterPro" id="IPR012336">
    <property type="entry name" value="Thioredoxin-like_fold"/>
</dbReference>
<dbReference type="InterPro" id="IPR036249">
    <property type="entry name" value="Thioredoxin-like_sf"/>
</dbReference>
<dbReference type="InterPro" id="IPR013766">
    <property type="entry name" value="Thioredoxin_domain"/>
</dbReference>
<dbReference type="NCBIfam" id="TIGR02661">
    <property type="entry name" value="MauD"/>
    <property type="match status" value="1"/>
</dbReference>
<dbReference type="Pfam" id="PF13098">
    <property type="entry name" value="Thioredoxin_2"/>
    <property type="match status" value="1"/>
</dbReference>
<dbReference type="SUPFAM" id="SSF52833">
    <property type="entry name" value="Thioredoxin-like"/>
    <property type="match status" value="1"/>
</dbReference>
<dbReference type="PROSITE" id="PS51352">
    <property type="entry name" value="THIOREDOXIN_2"/>
    <property type="match status" value="1"/>
</dbReference>
<proteinExistence type="predicted"/>
<organism>
    <name type="scientific">Methylophilus methylotrophus</name>
    <name type="common">Bacterium W3A1</name>
    <dbReference type="NCBI Taxonomy" id="17"/>
    <lineage>
        <taxon>Bacteria</taxon>
        <taxon>Pseudomonadati</taxon>
        <taxon>Pseudomonadota</taxon>
        <taxon>Betaproteobacteria</taxon>
        <taxon>Nitrosomonadales</taxon>
        <taxon>Methylophilaceae</taxon>
        <taxon>Methylophilus</taxon>
    </lineage>
</organism>
<sequence length="211" mass="23083">MTSGILIASNVLLWGAFLALAALMLGVIRQIGLLHERSAPLGAMMIDHGPDVGERSPIFNVNTFDGEPVLVGRSITPGRPSLLMFTGPSCPICQKLLPIIRSVAAIEETDVILISDGTQAEHRQFLKDHPLDGELYVVSAEIGMRYQVSKVPYGVLLDQDGKILAKGLCNTREHVESLFETIREGHSTLQNYLKDENTAPKFKQVTANKVH</sequence>
<name>MAUD_METME</name>
<protein>
    <recommendedName>
        <fullName>Methylamine utilization protein MauD</fullName>
    </recommendedName>
</protein>
<comment type="function">
    <text>May be specifically involved in the processing, transport, and/or maturation of the MADH beta-subunit.</text>
</comment>
<comment type="pathway">
    <text>One-carbon metabolism; methylamine degradation.</text>
</comment>
<comment type="subcellular location">
    <subcellularLocation>
        <location evidence="3">Membrane</location>
        <topology evidence="3">Single-pass membrane protein</topology>
    </subcellularLocation>
</comment>
<evidence type="ECO:0000255" key="1"/>
<evidence type="ECO:0000255" key="2">
    <source>
        <dbReference type="PROSITE-ProRule" id="PRU00691"/>
    </source>
</evidence>
<evidence type="ECO:0000305" key="3"/>
<gene>
    <name type="primary">mauD</name>
</gene>
<keyword id="KW-0472">Membrane</keyword>
<keyword id="KW-0812">Transmembrane</keyword>
<keyword id="KW-1133">Transmembrane helix</keyword>